<protein>
    <recommendedName>
        <fullName evidence="1">UDP-N-acetylglucosamine--N-acetylmuramyl-(pentapeptide) pyrophosphoryl-undecaprenol N-acetylglucosamine transferase</fullName>
        <ecNumber evidence="1">2.4.1.227</ecNumber>
    </recommendedName>
    <alternativeName>
        <fullName evidence="1">Undecaprenyl-PP-MurNAc-pentapeptide-UDPGlcNAc GlcNAc transferase</fullName>
    </alternativeName>
</protein>
<accession>B2I9B3</accession>
<name>MURG_XYLF2</name>
<proteinExistence type="inferred from homology"/>
<comment type="function">
    <text evidence="1">Cell wall formation. Catalyzes the transfer of a GlcNAc subunit on undecaprenyl-pyrophosphoryl-MurNAc-pentapeptide (lipid intermediate I) to form undecaprenyl-pyrophosphoryl-MurNAc-(pentapeptide)GlcNAc (lipid intermediate II).</text>
</comment>
<comment type="catalytic activity">
    <reaction evidence="1">
        <text>di-trans,octa-cis-undecaprenyl diphospho-N-acetyl-alpha-D-muramoyl-L-alanyl-D-glutamyl-meso-2,6-diaminopimeloyl-D-alanyl-D-alanine + UDP-N-acetyl-alpha-D-glucosamine = di-trans,octa-cis-undecaprenyl diphospho-[N-acetyl-alpha-D-glucosaminyl-(1-&gt;4)]-N-acetyl-alpha-D-muramoyl-L-alanyl-D-glutamyl-meso-2,6-diaminopimeloyl-D-alanyl-D-alanine + UDP + H(+)</text>
        <dbReference type="Rhea" id="RHEA:31227"/>
        <dbReference type="ChEBI" id="CHEBI:15378"/>
        <dbReference type="ChEBI" id="CHEBI:57705"/>
        <dbReference type="ChEBI" id="CHEBI:58223"/>
        <dbReference type="ChEBI" id="CHEBI:61387"/>
        <dbReference type="ChEBI" id="CHEBI:61388"/>
        <dbReference type="EC" id="2.4.1.227"/>
    </reaction>
</comment>
<comment type="pathway">
    <text evidence="1">Cell wall biogenesis; peptidoglycan biosynthesis.</text>
</comment>
<comment type="subcellular location">
    <subcellularLocation>
        <location evidence="1">Cell inner membrane</location>
        <topology evidence="1">Peripheral membrane protein</topology>
        <orientation evidence="1">Cytoplasmic side</orientation>
    </subcellularLocation>
</comment>
<comment type="similarity">
    <text evidence="1">Belongs to the glycosyltransferase 28 family. MurG subfamily.</text>
</comment>
<dbReference type="EC" id="2.4.1.227" evidence="1"/>
<dbReference type="EMBL" id="CP001011">
    <property type="protein sequence ID" value="ACB93368.1"/>
    <property type="molecule type" value="Genomic_DNA"/>
</dbReference>
<dbReference type="RefSeq" id="WP_012382750.1">
    <property type="nucleotide sequence ID" value="NC_010577.1"/>
</dbReference>
<dbReference type="SMR" id="B2I9B3"/>
<dbReference type="CAZy" id="GT28">
    <property type="family name" value="Glycosyltransferase Family 28"/>
</dbReference>
<dbReference type="GeneID" id="93905725"/>
<dbReference type="KEGG" id="xfn:XfasM23_1969"/>
<dbReference type="HOGENOM" id="CLU_037404_2_0_6"/>
<dbReference type="UniPathway" id="UPA00219"/>
<dbReference type="Proteomes" id="UP000001698">
    <property type="component" value="Chromosome"/>
</dbReference>
<dbReference type="GO" id="GO:0005886">
    <property type="term" value="C:plasma membrane"/>
    <property type="evidence" value="ECO:0007669"/>
    <property type="project" value="UniProtKB-SubCell"/>
</dbReference>
<dbReference type="GO" id="GO:0051991">
    <property type="term" value="F:UDP-N-acetyl-D-glucosamine:N-acetylmuramoyl-L-alanyl-D-glutamyl-meso-2,6-diaminopimelyl-D-alanyl-D-alanine-diphosphoundecaprenol 4-beta-N-acetylglucosaminlytransferase activity"/>
    <property type="evidence" value="ECO:0007669"/>
    <property type="project" value="RHEA"/>
</dbReference>
<dbReference type="GO" id="GO:0050511">
    <property type="term" value="F:undecaprenyldiphospho-muramoylpentapeptide beta-N-acetylglucosaminyltransferase activity"/>
    <property type="evidence" value="ECO:0007669"/>
    <property type="project" value="UniProtKB-UniRule"/>
</dbReference>
<dbReference type="GO" id="GO:0005975">
    <property type="term" value="P:carbohydrate metabolic process"/>
    <property type="evidence" value="ECO:0007669"/>
    <property type="project" value="InterPro"/>
</dbReference>
<dbReference type="GO" id="GO:0051301">
    <property type="term" value="P:cell division"/>
    <property type="evidence" value="ECO:0007669"/>
    <property type="project" value="UniProtKB-KW"/>
</dbReference>
<dbReference type="GO" id="GO:0071555">
    <property type="term" value="P:cell wall organization"/>
    <property type="evidence" value="ECO:0007669"/>
    <property type="project" value="UniProtKB-KW"/>
</dbReference>
<dbReference type="GO" id="GO:0030259">
    <property type="term" value="P:lipid glycosylation"/>
    <property type="evidence" value="ECO:0007669"/>
    <property type="project" value="UniProtKB-UniRule"/>
</dbReference>
<dbReference type="GO" id="GO:0009252">
    <property type="term" value="P:peptidoglycan biosynthetic process"/>
    <property type="evidence" value="ECO:0007669"/>
    <property type="project" value="UniProtKB-UniRule"/>
</dbReference>
<dbReference type="GO" id="GO:0008360">
    <property type="term" value="P:regulation of cell shape"/>
    <property type="evidence" value="ECO:0007669"/>
    <property type="project" value="UniProtKB-KW"/>
</dbReference>
<dbReference type="CDD" id="cd03785">
    <property type="entry name" value="GT28_MurG"/>
    <property type="match status" value="1"/>
</dbReference>
<dbReference type="Gene3D" id="3.40.50.2000">
    <property type="entry name" value="Glycogen Phosphorylase B"/>
    <property type="match status" value="2"/>
</dbReference>
<dbReference type="HAMAP" id="MF_00033">
    <property type="entry name" value="MurG"/>
    <property type="match status" value="1"/>
</dbReference>
<dbReference type="InterPro" id="IPR006009">
    <property type="entry name" value="GlcNAc_MurG"/>
</dbReference>
<dbReference type="InterPro" id="IPR007235">
    <property type="entry name" value="Glyco_trans_28_C"/>
</dbReference>
<dbReference type="InterPro" id="IPR004276">
    <property type="entry name" value="GlycoTrans_28_N"/>
</dbReference>
<dbReference type="NCBIfam" id="TIGR01133">
    <property type="entry name" value="murG"/>
    <property type="match status" value="1"/>
</dbReference>
<dbReference type="PANTHER" id="PTHR21015:SF22">
    <property type="entry name" value="GLYCOSYLTRANSFERASE"/>
    <property type="match status" value="1"/>
</dbReference>
<dbReference type="PANTHER" id="PTHR21015">
    <property type="entry name" value="UDP-N-ACETYLGLUCOSAMINE--N-ACETYLMURAMYL-(PENTAPEPTIDE) PYROPHOSPHORYL-UNDECAPRENOL N-ACETYLGLUCOSAMINE TRANSFERASE 1"/>
    <property type="match status" value="1"/>
</dbReference>
<dbReference type="Pfam" id="PF04101">
    <property type="entry name" value="Glyco_tran_28_C"/>
    <property type="match status" value="1"/>
</dbReference>
<dbReference type="Pfam" id="PF03033">
    <property type="entry name" value="Glyco_transf_28"/>
    <property type="match status" value="1"/>
</dbReference>
<dbReference type="SUPFAM" id="SSF53756">
    <property type="entry name" value="UDP-Glycosyltransferase/glycogen phosphorylase"/>
    <property type="match status" value="1"/>
</dbReference>
<gene>
    <name evidence="1" type="primary">murG</name>
    <name type="ordered locus">XfasM23_1969</name>
</gene>
<feature type="chain" id="PRO_1000090489" description="UDP-N-acetylglucosamine--N-acetylmuramyl-(pentapeptide) pyrophosphoryl-undecaprenol N-acetylglucosamine transferase">
    <location>
        <begin position="1"/>
        <end position="367"/>
    </location>
</feature>
<feature type="binding site" evidence="1">
    <location>
        <begin position="22"/>
        <end position="24"/>
    </location>
    <ligand>
        <name>UDP-N-acetyl-alpha-D-glucosamine</name>
        <dbReference type="ChEBI" id="CHEBI:57705"/>
    </ligand>
</feature>
<feature type="binding site" evidence="1">
    <location>
        <position position="134"/>
    </location>
    <ligand>
        <name>UDP-N-acetyl-alpha-D-glucosamine</name>
        <dbReference type="ChEBI" id="CHEBI:57705"/>
    </ligand>
</feature>
<feature type="binding site" evidence="1">
    <location>
        <position position="170"/>
    </location>
    <ligand>
        <name>UDP-N-acetyl-alpha-D-glucosamine</name>
        <dbReference type="ChEBI" id="CHEBI:57705"/>
    </ligand>
</feature>
<feature type="binding site" evidence="1">
    <location>
        <position position="198"/>
    </location>
    <ligand>
        <name>UDP-N-acetyl-alpha-D-glucosamine</name>
        <dbReference type="ChEBI" id="CHEBI:57705"/>
    </ligand>
</feature>
<feature type="binding site" evidence="1">
    <location>
        <position position="253"/>
    </location>
    <ligand>
        <name>UDP-N-acetyl-alpha-D-glucosamine</name>
        <dbReference type="ChEBI" id="CHEBI:57705"/>
    </ligand>
</feature>
<feature type="binding site" evidence="1">
    <location>
        <position position="298"/>
    </location>
    <ligand>
        <name>UDP-N-acetyl-alpha-D-glucosamine</name>
        <dbReference type="ChEBI" id="CHEBI:57705"/>
    </ligand>
</feature>
<keyword id="KW-0131">Cell cycle</keyword>
<keyword id="KW-0132">Cell division</keyword>
<keyword id="KW-0997">Cell inner membrane</keyword>
<keyword id="KW-1003">Cell membrane</keyword>
<keyword id="KW-0133">Cell shape</keyword>
<keyword id="KW-0961">Cell wall biogenesis/degradation</keyword>
<keyword id="KW-0328">Glycosyltransferase</keyword>
<keyword id="KW-0472">Membrane</keyword>
<keyword id="KW-0573">Peptidoglycan synthesis</keyword>
<keyword id="KW-0808">Transferase</keyword>
<organism>
    <name type="scientific">Xylella fastidiosa (strain M23)</name>
    <dbReference type="NCBI Taxonomy" id="405441"/>
    <lineage>
        <taxon>Bacteria</taxon>
        <taxon>Pseudomonadati</taxon>
        <taxon>Pseudomonadota</taxon>
        <taxon>Gammaproteobacteria</taxon>
        <taxon>Lysobacterales</taxon>
        <taxon>Lysobacteraceae</taxon>
        <taxon>Xylella</taxon>
    </lineage>
</organism>
<reference key="1">
    <citation type="journal article" date="2010" name="J. Bacteriol.">
        <title>Whole genome sequences of two Xylella fastidiosa strains (M12 and M23) causing almond leaf scorch disease in California.</title>
        <authorList>
            <person name="Chen J."/>
            <person name="Xie G."/>
            <person name="Han S."/>
            <person name="Chertkov O."/>
            <person name="Sims D."/>
            <person name="Civerolo E.L."/>
        </authorList>
    </citation>
    <scope>NUCLEOTIDE SEQUENCE [LARGE SCALE GENOMIC DNA]</scope>
    <source>
        <strain>M23</strain>
    </source>
</reference>
<evidence type="ECO:0000255" key="1">
    <source>
        <dbReference type="HAMAP-Rule" id="MF_00033"/>
    </source>
</evidence>
<sequence length="367" mass="38518">MSIVVQSAVTHFRPVMILAGGTGGHIFPGLAVAGVLRARGVPVVWLGAAGKMETHLVPKHGIEIQTIAVSGVRGHGMLALLGAPVRVLPAIFAAMRVLRRYRPRVVVSFGGFAAGPGGIAARLMGLPLIVHEQNRAPGMTNRVLARVARRVLSGFPGSFVAEEVVGNPVRKDIAALPAPGVRFAGRSGPVRLLVLGGSQGARVMNNALPVVLRVLSDSDVAVEVRHQCGEALRAETEGAYAYAGVAARVEPFISDMAAAYSWADLVVCRAGASTLAELCAAGVGSVLIPFPAAVDDHQRRNAEYLVAAGAALLLQQQDRAFYVYLESVLRDLLSNPMRRLAMAEAARGLAKSDAAECIAEIILKESI</sequence>